<evidence type="ECO:0000255" key="1">
    <source>
        <dbReference type="HAMAP-Rule" id="MF_01818"/>
    </source>
</evidence>
<evidence type="ECO:0000305" key="2"/>
<comment type="function">
    <text evidence="1">Zinc phosphodiesterase, which has both exoribonuclease and endoribonuclease activities.</text>
</comment>
<comment type="cofactor">
    <cofactor evidence="1">
        <name>Zn(2+)</name>
        <dbReference type="ChEBI" id="CHEBI:29105"/>
    </cofactor>
    <text evidence="1">Binds 2 Zn(2+) ions.</text>
</comment>
<comment type="subunit">
    <text evidence="1">Homodimer.</text>
</comment>
<comment type="similarity">
    <text evidence="1">Belongs to the RNase Z family. RNase BN subfamily.</text>
</comment>
<comment type="sequence caution" evidence="2">
    <conflict type="erroneous initiation">
        <sequence resource="EMBL-CDS" id="AAG57401"/>
    </conflict>
    <text>Extended N-terminus.</text>
</comment>
<feature type="chain" id="PRO_0000155864" description="Ribonuclease BN">
    <location>
        <begin position="1"/>
        <end position="305"/>
    </location>
</feature>
<feature type="active site" description="Proton acceptor" evidence="1">
    <location>
        <position position="68"/>
    </location>
</feature>
<feature type="binding site" evidence="1">
    <location>
        <position position="64"/>
    </location>
    <ligand>
        <name>Zn(2+)</name>
        <dbReference type="ChEBI" id="CHEBI:29105"/>
        <label>1</label>
        <note>catalytic</note>
    </ligand>
</feature>
<feature type="binding site" evidence="1">
    <location>
        <position position="66"/>
    </location>
    <ligand>
        <name>Zn(2+)</name>
        <dbReference type="ChEBI" id="CHEBI:29105"/>
        <label>1</label>
        <note>catalytic</note>
    </ligand>
</feature>
<feature type="binding site" evidence="1">
    <location>
        <position position="68"/>
    </location>
    <ligand>
        <name>Zn(2+)</name>
        <dbReference type="ChEBI" id="CHEBI:29105"/>
        <label>2</label>
        <note>catalytic</note>
    </ligand>
</feature>
<feature type="binding site" evidence="1">
    <location>
        <position position="69"/>
    </location>
    <ligand>
        <name>Zn(2+)</name>
        <dbReference type="ChEBI" id="CHEBI:29105"/>
        <label>2</label>
        <note>catalytic</note>
    </ligand>
</feature>
<feature type="binding site" evidence="1">
    <location>
        <position position="141"/>
    </location>
    <ligand>
        <name>Zn(2+)</name>
        <dbReference type="ChEBI" id="CHEBI:29105"/>
        <label>1</label>
        <note>catalytic</note>
    </ligand>
</feature>
<feature type="binding site" evidence="1">
    <location>
        <position position="212"/>
    </location>
    <ligand>
        <name>Zn(2+)</name>
        <dbReference type="ChEBI" id="CHEBI:29105"/>
        <label>1</label>
        <note>catalytic</note>
    </ligand>
</feature>
<feature type="binding site" evidence="1">
    <location>
        <position position="212"/>
    </location>
    <ligand>
        <name>Zn(2+)</name>
        <dbReference type="ChEBI" id="CHEBI:29105"/>
        <label>2</label>
        <note>catalytic</note>
    </ligand>
</feature>
<feature type="binding site" evidence="1">
    <location>
        <position position="270"/>
    </location>
    <ligand>
        <name>Zn(2+)</name>
        <dbReference type="ChEBI" id="CHEBI:29105"/>
        <label>2</label>
        <note>catalytic</note>
    </ligand>
</feature>
<keyword id="KW-0255">Endonuclease</keyword>
<keyword id="KW-0269">Exonuclease</keyword>
<keyword id="KW-0378">Hydrolase</keyword>
<keyword id="KW-0479">Metal-binding</keyword>
<keyword id="KW-0540">Nuclease</keyword>
<keyword id="KW-1185">Reference proteome</keyword>
<keyword id="KW-0819">tRNA processing</keyword>
<keyword id="KW-0862">Zinc</keyword>
<sequence length="305" mass="33008">MELIFLGTSAGVPTRTRNVTAILLNLQHPTQSGLWLFDCGEGTQHQLLHTAFNPGKLDKIFISHLHGDHLFGLPGLLCSRSMSGIIQPLTIYGPQGIREFVETALRISGSWTDYPLEIVEIGAGEILDDGLRKVTAYPMEHPLECYGYRIEEHDKPGALNAQALKAAGVPPSPLFQELKAGKTIMLEDGRQINGADYLAAPVPGKALAIFGDTGPCDAALDLAKGVDVMVHEATLDITMEAKANSRGHSSTRQAATLAREAGVGKLIITHVSSRYDDKGCQHLLRECRSIFPATELANDFTVFNV</sequence>
<gene>
    <name evidence="1" type="primary">rbn</name>
    <name type="synonym">elaC</name>
    <name type="synonym">rnz</name>
    <name type="ordered locus">Z3528</name>
    <name type="ordered locus">ECs3156</name>
</gene>
<reference key="1">
    <citation type="journal article" date="2001" name="Nature">
        <title>Genome sequence of enterohaemorrhagic Escherichia coli O157:H7.</title>
        <authorList>
            <person name="Perna N.T."/>
            <person name="Plunkett G. III"/>
            <person name="Burland V."/>
            <person name="Mau B."/>
            <person name="Glasner J.D."/>
            <person name="Rose D.J."/>
            <person name="Mayhew G.F."/>
            <person name="Evans P.S."/>
            <person name="Gregor J."/>
            <person name="Kirkpatrick H.A."/>
            <person name="Posfai G."/>
            <person name="Hackett J."/>
            <person name="Klink S."/>
            <person name="Boutin A."/>
            <person name="Shao Y."/>
            <person name="Miller L."/>
            <person name="Grotbeck E.J."/>
            <person name="Davis N.W."/>
            <person name="Lim A."/>
            <person name="Dimalanta E.T."/>
            <person name="Potamousis K."/>
            <person name="Apodaca J."/>
            <person name="Anantharaman T.S."/>
            <person name="Lin J."/>
            <person name="Yen G."/>
            <person name="Schwartz D.C."/>
            <person name="Welch R.A."/>
            <person name="Blattner F.R."/>
        </authorList>
    </citation>
    <scope>NUCLEOTIDE SEQUENCE [LARGE SCALE GENOMIC DNA]</scope>
    <source>
        <strain>O157:H7 / EDL933 / ATCC 700927 / EHEC</strain>
    </source>
</reference>
<reference key="2">
    <citation type="journal article" date="2001" name="DNA Res.">
        <title>Complete genome sequence of enterohemorrhagic Escherichia coli O157:H7 and genomic comparison with a laboratory strain K-12.</title>
        <authorList>
            <person name="Hayashi T."/>
            <person name="Makino K."/>
            <person name="Ohnishi M."/>
            <person name="Kurokawa K."/>
            <person name="Ishii K."/>
            <person name="Yokoyama K."/>
            <person name="Han C.-G."/>
            <person name="Ohtsubo E."/>
            <person name="Nakayama K."/>
            <person name="Murata T."/>
            <person name="Tanaka M."/>
            <person name="Tobe T."/>
            <person name="Iida T."/>
            <person name="Takami H."/>
            <person name="Honda T."/>
            <person name="Sasakawa C."/>
            <person name="Ogasawara N."/>
            <person name="Yasunaga T."/>
            <person name="Kuhara S."/>
            <person name="Shiba T."/>
            <person name="Hattori M."/>
            <person name="Shinagawa H."/>
        </authorList>
    </citation>
    <scope>NUCLEOTIDE SEQUENCE [LARGE SCALE GENOMIC DNA]</scope>
    <source>
        <strain>O157:H7 / Sakai / RIMD 0509952 / EHEC</strain>
    </source>
</reference>
<name>RBN_ECO57</name>
<protein>
    <recommendedName>
        <fullName evidence="1">Ribonuclease BN</fullName>
        <shortName evidence="1">RNase BN</shortName>
        <ecNumber evidence="1">3.1.-.-</ecNumber>
    </recommendedName>
    <alternativeName>
        <fullName evidence="1">Ribonuclease Z homolog</fullName>
        <shortName evidence="1">RNase Z homolog</shortName>
    </alternativeName>
</protein>
<accession>Q8XCZ0</accession>
<dbReference type="EC" id="3.1.-.-" evidence="1"/>
<dbReference type="EMBL" id="AE005174">
    <property type="protein sequence ID" value="AAG57401.1"/>
    <property type="status" value="ALT_INIT"/>
    <property type="molecule type" value="Genomic_DNA"/>
</dbReference>
<dbReference type="EMBL" id="BA000007">
    <property type="protein sequence ID" value="BAB36579.2"/>
    <property type="molecule type" value="Genomic_DNA"/>
</dbReference>
<dbReference type="PIR" id="D91023">
    <property type="entry name" value="D91023"/>
</dbReference>
<dbReference type="PIR" id="E85867">
    <property type="entry name" value="E85867"/>
</dbReference>
<dbReference type="RefSeq" id="NP_311183.2">
    <property type="nucleotide sequence ID" value="NC_002695.1"/>
</dbReference>
<dbReference type="RefSeq" id="WP_001303086.1">
    <property type="nucleotide sequence ID" value="NZ_VOAI01000001.1"/>
</dbReference>
<dbReference type="SMR" id="Q8XCZ0"/>
<dbReference type="STRING" id="155864.Z3528"/>
<dbReference type="GeneID" id="916864"/>
<dbReference type="KEGG" id="ece:Z3528"/>
<dbReference type="KEGG" id="ecs:ECs_3156"/>
<dbReference type="PATRIC" id="fig|386585.9.peg.3293"/>
<dbReference type="eggNOG" id="COG1234">
    <property type="taxonomic scope" value="Bacteria"/>
</dbReference>
<dbReference type="HOGENOM" id="CLU_031317_2_0_6"/>
<dbReference type="Proteomes" id="UP000000558">
    <property type="component" value="Chromosome"/>
</dbReference>
<dbReference type="Proteomes" id="UP000002519">
    <property type="component" value="Chromosome"/>
</dbReference>
<dbReference type="GO" id="GO:0042781">
    <property type="term" value="F:3'-tRNA processing endoribonuclease activity"/>
    <property type="evidence" value="ECO:0007669"/>
    <property type="project" value="TreeGrafter"/>
</dbReference>
<dbReference type="GO" id="GO:0004527">
    <property type="term" value="F:exonuclease activity"/>
    <property type="evidence" value="ECO:0007669"/>
    <property type="project" value="UniProtKB-UniRule"/>
</dbReference>
<dbReference type="GO" id="GO:0008270">
    <property type="term" value="F:zinc ion binding"/>
    <property type="evidence" value="ECO:0007669"/>
    <property type="project" value="UniProtKB-UniRule"/>
</dbReference>
<dbReference type="CDD" id="cd07717">
    <property type="entry name" value="RNaseZ_ZiPD-like_MBL-fold"/>
    <property type="match status" value="1"/>
</dbReference>
<dbReference type="FunFam" id="3.60.15.10:FF:000002">
    <property type="entry name" value="Ribonuclease Z"/>
    <property type="match status" value="1"/>
</dbReference>
<dbReference type="Gene3D" id="3.60.15.10">
    <property type="entry name" value="Ribonuclease Z/Hydroxyacylglutathione hydrolase-like"/>
    <property type="match status" value="1"/>
</dbReference>
<dbReference type="HAMAP" id="MF_01818">
    <property type="entry name" value="RNase_Z_BN"/>
    <property type="match status" value="1"/>
</dbReference>
<dbReference type="InterPro" id="IPR001279">
    <property type="entry name" value="Metallo-B-lactamas"/>
</dbReference>
<dbReference type="InterPro" id="IPR036866">
    <property type="entry name" value="RibonucZ/Hydroxyglut_hydro"/>
</dbReference>
<dbReference type="InterPro" id="IPR013469">
    <property type="entry name" value="Rnase_BN"/>
</dbReference>
<dbReference type="InterPro" id="IPR013471">
    <property type="entry name" value="RNase_Z/BN"/>
</dbReference>
<dbReference type="NCBIfam" id="NF000800">
    <property type="entry name" value="PRK00055.1-1"/>
    <property type="match status" value="1"/>
</dbReference>
<dbReference type="NCBIfam" id="NF000801">
    <property type="entry name" value="PRK00055.1-3"/>
    <property type="match status" value="1"/>
</dbReference>
<dbReference type="NCBIfam" id="TIGR02651">
    <property type="entry name" value="RNase_Z"/>
    <property type="match status" value="1"/>
</dbReference>
<dbReference type="NCBIfam" id="TIGR02649">
    <property type="entry name" value="true_RNase_BN"/>
    <property type="match status" value="1"/>
</dbReference>
<dbReference type="PANTHER" id="PTHR46018">
    <property type="entry name" value="ZINC PHOSPHODIESTERASE ELAC PROTEIN 1"/>
    <property type="match status" value="1"/>
</dbReference>
<dbReference type="PANTHER" id="PTHR46018:SF2">
    <property type="entry name" value="ZINC PHOSPHODIESTERASE ELAC PROTEIN 1"/>
    <property type="match status" value="1"/>
</dbReference>
<dbReference type="Pfam" id="PF12706">
    <property type="entry name" value="Lactamase_B_2"/>
    <property type="match status" value="1"/>
</dbReference>
<dbReference type="SUPFAM" id="SSF56281">
    <property type="entry name" value="Metallo-hydrolase/oxidoreductase"/>
    <property type="match status" value="1"/>
</dbReference>
<proteinExistence type="inferred from homology"/>
<organism>
    <name type="scientific">Escherichia coli O157:H7</name>
    <dbReference type="NCBI Taxonomy" id="83334"/>
    <lineage>
        <taxon>Bacteria</taxon>
        <taxon>Pseudomonadati</taxon>
        <taxon>Pseudomonadota</taxon>
        <taxon>Gammaproteobacteria</taxon>
        <taxon>Enterobacterales</taxon>
        <taxon>Enterobacteriaceae</taxon>
        <taxon>Escherichia</taxon>
    </lineage>
</organism>